<feature type="chain" id="PRO_0000296777" description="DNA-directed RNA polymerase subunit alpha">
    <location>
        <begin position="1"/>
        <end position="329"/>
    </location>
</feature>
<feature type="region of interest" description="Alpha N-terminal domain (alpha-NTD)" evidence="1">
    <location>
        <begin position="1"/>
        <end position="235"/>
    </location>
</feature>
<feature type="region of interest" description="Alpha C-terminal domain (alpha-CTD)" evidence="1">
    <location>
        <begin position="249"/>
        <end position="329"/>
    </location>
</feature>
<evidence type="ECO:0000255" key="1">
    <source>
        <dbReference type="HAMAP-Rule" id="MF_00059"/>
    </source>
</evidence>
<accession>A0KF45</accession>
<name>RPOA_AERHH</name>
<dbReference type="EC" id="2.7.7.6" evidence="1"/>
<dbReference type="EMBL" id="CP000462">
    <property type="protein sequence ID" value="ABK37601.1"/>
    <property type="molecule type" value="Genomic_DNA"/>
</dbReference>
<dbReference type="RefSeq" id="WP_005307997.1">
    <property type="nucleotide sequence ID" value="NC_008570.1"/>
</dbReference>
<dbReference type="RefSeq" id="YP_854867.1">
    <property type="nucleotide sequence ID" value="NC_008570.1"/>
</dbReference>
<dbReference type="BMRB" id="A0KF45"/>
<dbReference type="SMR" id="A0KF45"/>
<dbReference type="STRING" id="380703.AHA_0333"/>
<dbReference type="EnsemblBacteria" id="ABK37601">
    <property type="protein sequence ID" value="ABK37601"/>
    <property type="gene ID" value="AHA_0333"/>
</dbReference>
<dbReference type="KEGG" id="aha:AHA_0333"/>
<dbReference type="PATRIC" id="fig|380703.7.peg.323"/>
<dbReference type="eggNOG" id="COG0202">
    <property type="taxonomic scope" value="Bacteria"/>
</dbReference>
<dbReference type="HOGENOM" id="CLU_053084_0_0_6"/>
<dbReference type="OrthoDB" id="9805706at2"/>
<dbReference type="PRO" id="PR:A0KF45"/>
<dbReference type="Proteomes" id="UP000000756">
    <property type="component" value="Chromosome"/>
</dbReference>
<dbReference type="GO" id="GO:0005737">
    <property type="term" value="C:cytoplasm"/>
    <property type="evidence" value="ECO:0007669"/>
    <property type="project" value="UniProtKB-ARBA"/>
</dbReference>
<dbReference type="GO" id="GO:0000428">
    <property type="term" value="C:DNA-directed RNA polymerase complex"/>
    <property type="evidence" value="ECO:0007669"/>
    <property type="project" value="UniProtKB-KW"/>
</dbReference>
<dbReference type="GO" id="GO:0003677">
    <property type="term" value="F:DNA binding"/>
    <property type="evidence" value="ECO:0007669"/>
    <property type="project" value="UniProtKB-UniRule"/>
</dbReference>
<dbReference type="GO" id="GO:0003899">
    <property type="term" value="F:DNA-directed RNA polymerase activity"/>
    <property type="evidence" value="ECO:0007669"/>
    <property type="project" value="UniProtKB-UniRule"/>
</dbReference>
<dbReference type="GO" id="GO:0046983">
    <property type="term" value="F:protein dimerization activity"/>
    <property type="evidence" value="ECO:0007669"/>
    <property type="project" value="InterPro"/>
</dbReference>
<dbReference type="GO" id="GO:0006351">
    <property type="term" value="P:DNA-templated transcription"/>
    <property type="evidence" value="ECO:0007669"/>
    <property type="project" value="UniProtKB-UniRule"/>
</dbReference>
<dbReference type="CDD" id="cd06928">
    <property type="entry name" value="RNAP_alpha_NTD"/>
    <property type="match status" value="1"/>
</dbReference>
<dbReference type="FunFam" id="1.10.150.20:FF:000001">
    <property type="entry name" value="DNA-directed RNA polymerase subunit alpha"/>
    <property type="match status" value="1"/>
</dbReference>
<dbReference type="FunFam" id="2.170.120.12:FF:000001">
    <property type="entry name" value="DNA-directed RNA polymerase subunit alpha"/>
    <property type="match status" value="1"/>
</dbReference>
<dbReference type="Gene3D" id="1.10.150.20">
    <property type="entry name" value="5' to 3' exonuclease, C-terminal subdomain"/>
    <property type="match status" value="1"/>
</dbReference>
<dbReference type="Gene3D" id="2.170.120.12">
    <property type="entry name" value="DNA-directed RNA polymerase, insert domain"/>
    <property type="match status" value="1"/>
</dbReference>
<dbReference type="Gene3D" id="3.30.1360.10">
    <property type="entry name" value="RNA polymerase, RBP11-like subunit"/>
    <property type="match status" value="1"/>
</dbReference>
<dbReference type="HAMAP" id="MF_00059">
    <property type="entry name" value="RNApol_bact_RpoA"/>
    <property type="match status" value="1"/>
</dbReference>
<dbReference type="InterPro" id="IPR011262">
    <property type="entry name" value="DNA-dir_RNA_pol_insert"/>
</dbReference>
<dbReference type="InterPro" id="IPR011263">
    <property type="entry name" value="DNA-dir_RNA_pol_RpoA/D/Rpb3"/>
</dbReference>
<dbReference type="InterPro" id="IPR011773">
    <property type="entry name" value="DNA-dir_RpoA"/>
</dbReference>
<dbReference type="InterPro" id="IPR036603">
    <property type="entry name" value="RBP11-like"/>
</dbReference>
<dbReference type="InterPro" id="IPR011260">
    <property type="entry name" value="RNAP_asu_C"/>
</dbReference>
<dbReference type="InterPro" id="IPR036643">
    <property type="entry name" value="RNApol_insert_sf"/>
</dbReference>
<dbReference type="NCBIfam" id="NF003513">
    <property type="entry name" value="PRK05182.1-2"/>
    <property type="match status" value="1"/>
</dbReference>
<dbReference type="NCBIfam" id="NF003519">
    <property type="entry name" value="PRK05182.2-5"/>
    <property type="match status" value="1"/>
</dbReference>
<dbReference type="NCBIfam" id="TIGR02027">
    <property type="entry name" value="rpoA"/>
    <property type="match status" value="1"/>
</dbReference>
<dbReference type="Pfam" id="PF01000">
    <property type="entry name" value="RNA_pol_A_bac"/>
    <property type="match status" value="1"/>
</dbReference>
<dbReference type="Pfam" id="PF03118">
    <property type="entry name" value="RNA_pol_A_CTD"/>
    <property type="match status" value="1"/>
</dbReference>
<dbReference type="Pfam" id="PF01193">
    <property type="entry name" value="RNA_pol_L"/>
    <property type="match status" value="1"/>
</dbReference>
<dbReference type="SMART" id="SM00662">
    <property type="entry name" value="RPOLD"/>
    <property type="match status" value="1"/>
</dbReference>
<dbReference type="SUPFAM" id="SSF47789">
    <property type="entry name" value="C-terminal domain of RNA polymerase alpha subunit"/>
    <property type="match status" value="1"/>
</dbReference>
<dbReference type="SUPFAM" id="SSF56553">
    <property type="entry name" value="Insert subdomain of RNA polymerase alpha subunit"/>
    <property type="match status" value="1"/>
</dbReference>
<dbReference type="SUPFAM" id="SSF55257">
    <property type="entry name" value="RBP11-like subunits of RNA polymerase"/>
    <property type="match status" value="1"/>
</dbReference>
<proteinExistence type="inferred from homology"/>
<comment type="function">
    <text evidence="1">DNA-dependent RNA polymerase catalyzes the transcription of DNA into RNA using the four ribonucleoside triphosphates as substrates.</text>
</comment>
<comment type="catalytic activity">
    <reaction evidence="1">
        <text>RNA(n) + a ribonucleoside 5'-triphosphate = RNA(n+1) + diphosphate</text>
        <dbReference type="Rhea" id="RHEA:21248"/>
        <dbReference type="Rhea" id="RHEA-COMP:14527"/>
        <dbReference type="Rhea" id="RHEA-COMP:17342"/>
        <dbReference type="ChEBI" id="CHEBI:33019"/>
        <dbReference type="ChEBI" id="CHEBI:61557"/>
        <dbReference type="ChEBI" id="CHEBI:140395"/>
        <dbReference type="EC" id="2.7.7.6"/>
    </reaction>
</comment>
<comment type="subunit">
    <text evidence="1">Homodimer. The RNAP catalytic core consists of 2 alpha, 1 beta, 1 beta' and 1 omega subunit. When a sigma factor is associated with the core the holoenzyme is formed, which can initiate transcription.</text>
</comment>
<comment type="domain">
    <text evidence="1">The N-terminal domain is essential for RNAP assembly and basal transcription, whereas the C-terminal domain is involved in interaction with transcriptional regulators and with upstream promoter elements.</text>
</comment>
<comment type="similarity">
    <text evidence="1">Belongs to the RNA polymerase alpha chain family.</text>
</comment>
<organism>
    <name type="scientific">Aeromonas hydrophila subsp. hydrophila (strain ATCC 7966 / DSM 30187 / BCRC 13018 / CCUG 14551 / JCM 1027 / KCTC 2358 / NCIMB 9240 / NCTC 8049)</name>
    <dbReference type="NCBI Taxonomy" id="380703"/>
    <lineage>
        <taxon>Bacteria</taxon>
        <taxon>Pseudomonadati</taxon>
        <taxon>Pseudomonadota</taxon>
        <taxon>Gammaproteobacteria</taxon>
        <taxon>Aeromonadales</taxon>
        <taxon>Aeromonadaceae</taxon>
        <taxon>Aeromonas</taxon>
    </lineage>
</organism>
<reference key="1">
    <citation type="journal article" date="2006" name="J. Bacteriol.">
        <title>Genome sequence of Aeromonas hydrophila ATCC 7966T: jack of all trades.</title>
        <authorList>
            <person name="Seshadri R."/>
            <person name="Joseph S.W."/>
            <person name="Chopra A.K."/>
            <person name="Sha J."/>
            <person name="Shaw J."/>
            <person name="Graf J."/>
            <person name="Haft D.H."/>
            <person name="Wu M."/>
            <person name="Ren Q."/>
            <person name="Rosovitz M.J."/>
            <person name="Madupu R."/>
            <person name="Tallon L."/>
            <person name="Kim M."/>
            <person name="Jin S."/>
            <person name="Vuong H."/>
            <person name="Stine O.C."/>
            <person name="Ali A."/>
            <person name="Horneman A.J."/>
            <person name="Heidelberg J.F."/>
        </authorList>
    </citation>
    <scope>NUCLEOTIDE SEQUENCE [LARGE SCALE GENOMIC DNA]</scope>
    <source>
        <strain>ATCC 7966 / DSM 30187 / BCRC 13018 / CCUG 14551 / JCM 1027 / KCTC 2358 / NCIMB 9240 / NCTC 8049</strain>
    </source>
</reference>
<gene>
    <name evidence="1" type="primary">rpoA</name>
    <name type="ordered locus">AHA_0333</name>
</gene>
<sequence length="329" mass="36195">MLGSVTDFLKPRLVDIEQVSPTHAKVTLEPLERGFGHTLGNALRRILLSSMPGCAVTEVEIDGVLHEYSSKEGVQEDILEILLNLKGIAVKLEGKDEVTLSLTKSGTGPVTAGDITHGDEVEIVNPEHVICHLTGANAEISMRLKVQRGRGYVPASARVHNDDEERPIGRLLLDSAFSPIVRIAYNVEAARVEQRTDLDKLVIDMETNGTLDPEEAIRRSATILAEQLEAFVDLRDVSVPEKKEEKPEFDPILLRPVDDLELTVRSANCLKAEAIHYIGDLVQRTEVELLKTPNLGKKSLTEIKDVLASRGLSLGMRLENWPPASIADE</sequence>
<keyword id="KW-0240">DNA-directed RNA polymerase</keyword>
<keyword id="KW-0548">Nucleotidyltransferase</keyword>
<keyword id="KW-1185">Reference proteome</keyword>
<keyword id="KW-0804">Transcription</keyword>
<keyword id="KW-0808">Transferase</keyword>
<protein>
    <recommendedName>
        <fullName evidence="1">DNA-directed RNA polymerase subunit alpha</fullName>
        <shortName evidence="1">RNAP subunit alpha</shortName>
        <ecNumber evidence="1">2.7.7.6</ecNumber>
    </recommendedName>
    <alternativeName>
        <fullName evidence="1">RNA polymerase subunit alpha</fullName>
    </alternativeName>
    <alternativeName>
        <fullName evidence="1">Transcriptase subunit alpha</fullName>
    </alternativeName>
</protein>